<organism>
    <name type="scientific">Human herpesvirus 8 type P (isolate GK18)</name>
    <name type="common">HHV-8</name>
    <name type="synonym">Kaposi's sarcoma-associated herpesvirus</name>
    <dbReference type="NCBI Taxonomy" id="868565"/>
    <lineage>
        <taxon>Viruses</taxon>
        <taxon>Duplodnaviria</taxon>
        <taxon>Heunggongvirae</taxon>
        <taxon>Peploviricota</taxon>
        <taxon>Herviviricetes</taxon>
        <taxon>Herpesvirales</taxon>
        <taxon>Orthoherpesviridae</taxon>
        <taxon>Gammaherpesvirinae</taxon>
        <taxon>Rhadinovirus</taxon>
        <taxon>Rhadinovirus humangamma8</taxon>
        <taxon>Human herpesvirus 8</taxon>
    </lineage>
</organism>
<feature type="chain" id="PRO_0000423794" description="Protein K12">
    <location>
        <begin position="1"/>
        <end position="60"/>
    </location>
</feature>
<dbReference type="EMBL" id="AF148805">
    <property type="protein sequence ID" value="AAD46499.1"/>
    <property type="molecule type" value="Genomic_DNA"/>
</dbReference>
<dbReference type="RefSeq" id="YP_001129428.1">
    <property type="nucleotide sequence ID" value="NC_009333.1"/>
</dbReference>
<dbReference type="BioGRID" id="1776949">
    <property type="interactions" value="6"/>
</dbReference>
<dbReference type="KEGG" id="vg:4961446"/>
<dbReference type="Proteomes" id="UP000000942">
    <property type="component" value="Segment"/>
</dbReference>
<organismHost>
    <name type="scientific">Homo sapiens</name>
    <name type="common">Human</name>
    <dbReference type="NCBI Taxonomy" id="9606"/>
</organismHost>
<proteinExistence type="predicted"/>
<keyword id="KW-1185">Reference proteome</keyword>
<protein>
    <recommendedName>
        <fullName>Protein K12</fullName>
    </recommendedName>
</protein>
<accession>Q77Q38</accession>
<name>K12_HHV8P</name>
<gene>
    <name type="primary">K12</name>
</gene>
<sequence>MDRGLTVFVAVHVPDVLLNGWRWRLGAIPPLVCLLAISVVPPSGQRGPVAFRTRVATGAH</sequence>
<reference key="1">
    <citation type="journal article" date="1999" name="J. Virol.">
        <title>Identification of a spliced gene from Kaposi's sarcoma-associated herpesvirus encoding a protein with similarities to latent membrane proteins 1 and 2A of Epstein-Barr virus.</title>
        <authorList>
            <person name="Glenn M."/>
            <person name="Rainbow L."/>
            <person name="Aurade F."/>
            <person name="Davison A."/>
            <person name="Schulz T.F."/>
        </authorList>
    </citation>
    <scope>NUCLEOTIDE SEQUENCE [LARGE SCALE GENOMIC DNA]</scope>
</reference>
<reference key="2">
    <citation type="journal article" date="2006" name="J. Gen. Virol.">
        <title>Kaposi's sarcoma-associated herpesvirus immune modulation: an overview.</title>
        <authorList>
            <person name="Rezaee S.A.R."/>
            <person name="Cunningham C."/>
            <person name="Davison A.J."/>
            <person name="Blackbourn D.J."/>
        </authorList>
    </citation>
    <scope>NUCLEOTIDE SEQUENCE [LARGE SCALE GENOMIC DNA]</scope>
</reference>